<accession>Q0C7P6</accession>
<reference key="1">
    <citation type="submission" date="2005-09" db="EMBL/GenBank/DDBJ databases">
        <title>Annotation of the Aspergillus terreus NIH2624 genome.</title>
        <authorList>
            <person name="Birren B.W."/>
            <person name="Lander E.S."/>
            <person name="Galagan J.E."/>
            <person name="Nusbaum C."/>
            <person name="Devon K."/>
            <person name="Henn M."/>
            <person name="Ma L.-J."/>
            <person name="Jaffe D.B."/>
            <person name="Butler J."/>
            <person name="Alvarez P."/>
            <person name="Gnerre S."/>
            <person name="Grabherr M."/>
            <person name="Kleber M."/>
            <person name="Mauceli E.W."/>
            <person name="Brockman W."/>
            <person name="Rounsley S."/>
            <person name="Young S.K."/>
            <person name="LaButti K."/>
            <person name="Pushparaj V."/>
            <person name="DeCaprio D."/>
            <person name="Crawford M."/>
            <person name="Koehrsen M."/>
            <person name="Engels R."/>
            <person name="Montgomery P."/>
            <person name="Pearson M."/>
            <person name="Howarth C."/>
            <person name="Larson L."/>
            <person name="Luoma S."/>
            <person name="White J."/>
            <person name="Alvarado L."/>
            <person name="Kodira C.D."/>
            <person name="Zeng Q."/>
            <person name="Oleary S."/>
            <person name="Yandava C."/>
            <person name="Denning D.W."/>
            <person name="Nierman W.C."/>
            <person name="Milne T."/>
            <person name="Madden K."/>
        </authorList>
    </citation>
    <scope>NUCLEOTIDE SEQUENCE [LARGE SCALE GENOMIC DNA]</scope>
    <source>
        <strain>NIH 2624 / FGSC A1156</strain>
    </source>
</reference>
<feature type="signal peptide" evidence="3">
    <location>
        <begin position="1"/>
        <end position="18"/>
    </location>
</feature>
<feature type="chain" id="PRO_0000395147" description="Probable glucan endo-1,3-beta-glucosidase eglC">
    <location>
        <begin position="19"/>
        <end position="463"/>
    </location>
</feature>
<feature type="propeptide" id="PRO_0000395148" description="Removed in mature form" evidence="3">
    <location>
        <begin position="464"/>
        <end position="486"/>
    </location>
</feature>
<feature type="region of interest" description="Disordered" evidence="4">
    <location>
        <begin position="330"/>
        <end position="458"/>
    </location>
</feature>
<feature type="compositionally biased region" description="Low complexity" evidence="4">
    <location>
        <begin position="341"/>
        <end position="404"/>
    </location>
</feature>
<feature type="compositionally biased region" description="Low complexity" evidence="4">
    <location>
        <begin position="413"/>
        <end position="424"/>
    </location>
</feature>
<feature type="compositionally biased region" description="Polar residues" evidence="4">
    <location>
        <begin position="430"/>
        <end position="442"/>
    </location>
</feature>
<feature type="compositionally biased region" description="Low complexity" evidence="4">
    <location>
        <begin position="445"/>
        <end position="458"/>
    </location>
</feature>
<feature type="active site" description="Proton donor" evidence="2">
    <location>
        <position position="128"/>
    </location>
</feature>
<feature type="active site" description="Nucleophile" evidence="2">
    <location>
        <position position="239"/>
    </location>
</feature>
<feature type="lipid moiety-binding region" description="GPI-anchor amidated glycine" evidence="3">
    <location>
        <position position="463"/>
    </location>
</feature>
<feature type="glycosylation site" description="N-linked (GlcNAc...) asparagine" evidence="3">
    <location>
        <position position="84"/>
    </location>
</feature>
<feature type="glycosylation site" description="N-linked (GlcNAc...) asparagine" evidence="3">
    <location>
        <position position="183"/>
    </location>
</feature>
<feature type="glycosylation site" description="N-linked (GlcNAc...) asparagine" evidence="3">
    <location>
        <position position="315"/>
    </location>
</feature>
<feature type="glycosylation site" description="N-linked (GlcNAc...) asparagine" evidence="3">
    <location>
        <position position="386"/>
    </location>
</feature>
<feature type="glycosylation site" description="N-linked (GlcNAc...) asparagine" evidence="3">
    <location>
        <position position="396"/>
    </location>
</feature>
<feature type="glycosylation site" description="N-linked (GlcNAc...) asparagine" evidence="3">
    <location>
        <position position="404"/>
    </location>
</feature>
<proteinExistence type="inferred from homology"/>
<organism>
    <name type="scientific">Aspergillus terreus (strain NIH 2624 / FGSC A1156)</name>
    <dbReference type="NCBI Taxonomy" id="341663"/>
    <lineage>
        <taxon>Eukaryota</taxon>
        <taxon>Fungi</taxon>
        <taxon>Dikarya</taxon>
        <taxon>Ascomycota</taxon>
        <taxon>Pezizomycotina</taxon>
        <taxon>Eurotiomycetes</taxon>
        <taxon>Eurotiomycetidae</taxon>
        <taxon>Eurotiales</taxon>
        <taxon>Aspergillaceae</taxon>
        <taxon>Aspergillus</taxon>
        <taxon>Aspergillus subgen. Circumdati</taxon>
    </lineage>
</organism>
<comment type="function">
    <text evidence="1">Glucanases play a role in cell expansion during growth, in cell-cell fusion during mating, and in spore release during sporulation. This enzyme may be involved in beta-glucan degradation and also function biosynthetically as a transglycosylase (By similarity).</text>
</comment>
<comment type="catalytic activity">
    <reaction>
        <text>Hydrolysis of (1-&gt;3)-beta-D-glucosidic linkages in (1-&gt;3)-beta-D-glucans.</text>
        <dbReference type="EC" id="3.2.1.39"/>
    </reaction>
</comment>
<comment type="subcellular location">
    <subcellularLocation>
        <location evidence="1">Cell membrane</location>
        <topology evidence="1">Lipid-anchor</topology>
        <topology evidence="1">GPI-anchor</topology>
    </subcellularLocation>
    <subcellularLocation>
        <location evidence="1">Secreted</location>
        <location evidence="1">Cell wall</location>
    </subcellularLocation>
    <text evidence="1">Covalently-linked GPI-modified cell wall protein.</text>
</comment>
<comment type="PTM">
    <text evidence="1">The GPI-anchor is attached to the protein in the endoplasmic reticulum and serves to target the protein to the cell surface. There, the glucosamine-inositol phospholipid moiety is cleaved off and the GPI-modified mannoprotein is covalently attached via its lipidless GPI glycan remnant to the 1,6-beta-glucan of the outer cell wall layer (By similarity).</text>
</comment>
<comment type="similarity">
    <text evidence="5">Belongs to the glycosyl hydrolase 17 family.</text>
</comment>
<keyword id="KW-0119">Carbohydrate metabolism</keyword>
<keyword id="KW-1003">Cell membrane</keyword>
<keyword id="KW-0134">Cell wall</keyword>
<keyword id="KW-0961">Cell wall biogenesis/degradation</keyword>
<keyword id="KW-0325">Glycoprotein</keyword>
<keyword id="KW-0336">GPI-anchor</keyword>
<keyword id="KW-0378">Hydrolase</keyword>
<keyword id="KW-0449">Lipoprotein</keyword>
<keyword id="KW-0472">Membrane</keyword>
<keyword id="KW-0624">Polysaccharide degradation</keyword>
<keyword id="KW-1185">Reference proteome</keyword>
<keyword id="KW-0964">Secreted</keyword>
<keyword id="KW-0732">Signal</keyword>
<dbReference type="EC" id="3.2.1.39"/>
<dbReference type="EMBL" id="CH476610">
    <property type="protein sequence ID" value="EAU29285.1"/>
    <property type="molecule type" value="Genomic_DNA"/>
</dbReference>
<dbReference type="RefSeq" id="XP_001218636.1">
    <property type="nucleotide sequence ID" value="XM_001218635.1"/>
</dbReference>
<dbReference type="SMR" id="Q0C7P6"/>
<dbReference type="STRING" id="341663.Q0C7P6"/>
<dbReference type="GlyCosmos" id="Q0C7P6">
    <property type="glycosylation" value="6 sites, No reported glycans"/>
</dbReference>
<dbReference type="EnsemblFungi" id="EAU29285">
    <property type="protein sequence ID" value="EAU29285"/>
    <property type="gene ID" value="ATEG_10288"/>
</dbReference>
<dbReference type="GeneID" id="4354731"/>
<dbReference type="VEuPathDB" id="FungiDB:ATEG_10288"/>
<dbReference type="eggNOG" id="ENOG502SI3D">
    <property type="taxonomic scope" value="Eukaryota"/>
</dbReference>
<dbReference type="HOGENOM" id="CLU_028820_1_1_1"/>
<dbReference type="OMA" id="WDDVGCP"/>
<dbReference type="OrthoDB" id="77201at2759"/>
<dbReference type="Proteomes" id="UP000007963">
    <property type="component" value="Unassembled WGS sequence"/>
</dbReference>
<dbReference type="GO" id="GO:0009986">
    <property type="term" value="C:cell surface"/>
    <property type="evidence" value="ECO:0007669"/>
    <property type="project" value="TreeGrafter"/>
</dbReference>
<dbReference type="GO" id="GO:0005576">
    <property type="term" value="C:extracellular region"/>
    <property type="evidence" value="ECO:0007669"/>
    <property type="project" value="UniProtKB-KW"/>
</dbReference>
<dbReference type="GO" id="GO:0009277">
    <property type="term" value="C:fungal-type cell wall"/>
    <property type="evidence" value="ECO:0007669"/>
    <property type="project" value="TreeGrafter"/>
</dbReference>
<dbReference type="GO" id="GO:0005886">
    <property type="term" value="C:plasma membrane"/>
    <property type="evidence" value="ECO:0007669"/>
    <property type="project" value="UniProtKB-SubCell"/>
</dbReference>
<dbReference type="GO" id="GO:0098552">
    <property type="term" value="C:side of membrane"/>
    <property type="evidence" value="ECO:0007669"/>
    <property type="project" value="UniProtKB-KW"/>
</dbReference>
<dbReference type="GO" id="GO:0042973">
    <property type="term" value="F:glucan endo-1,3-beta-D-glucosidase activity"/>
    <property type="evidence" value="ECO:0007669"/>
    <property type="project" value="UniProtKB-EC"/>
</dbReference>
<dbReference type="GO" id="GO:0071555">
    <property type="term" value="P:cell wall organization"/>
    <property type="evidence" value="ECO:0007669"/>
    <property type="project" value="UniProtKB-KW"/>
</dbReference>
<dbReference type="GO" id="GO:0000272">
    <property type="term" value="P:polysaccharide catabolic process"/>
    <property type="evidence" value="ECO:0007669"/>
    <property type="project" value="UniProtKB-KW"/>
</dbReference>
<dbReference type="FunFam" id="3.20.20.80:FF:000233">
    <property type="entry name" value="Probable glucan endo-1,3-beta-glucosidase eglC"/>
    <property type="match status" value="1"/>
</dbReference>
<dbReference type="Gene3D" id="3.20.20.80">
    <property type="entry name" value="Glycosidases"/>
    <property type="match status" value="1"/>
</dbReference>
<dbReference type="InterPro" id="IPR050732">
    <property type="entry name" value="Beta-glucan_modifiers"/>
</dbReference>
<dbReference type="InterPro" id="IPR000490">
    <property type="entry name" value="Glyco_hydro_17"/>
</dbReference>
<dbReference type="InterPro" id="IPR017853">
    <property type="entry name" value="Glycoside_hydrolase_SF"/>
</dbReference>
<dbReference type="PANTHER" id="PTHR16631">
    <property type="entry name" value="GLUCAN 1,3-BETA-GLUCOSIDASE"/>
    <property type="match status" value="1"/>
</dbReference>
<dbReference type="PANTHER" id="PTHR16631:SF13">
    <property type="entry name" value="GLUCAN ENDO-1,3-BETA-GLUCOSIDASE EGLC-RELATED"/>
    <property type="match status" value="1"/>
</dbReference>
<dbReference type="Pfam" id="PF00332">
    <property type="entry name" value="Glyco_hydro_17"/>
    <property type="match status" value="1"/>
</dbReference>
<dbReference type="SUPFAM" id="SSF51445">
    <property type="entry name" value="(Trans)glycosidases"/>
    <property type="match status" value="1"/>
</dbReference>
<gene>
    <name type="primary">eglC</name>
    <name type="ORF">ATEG_10288</name>
</gene>
<sequence>MQLTQLLALALSLATSEAAYKGFNYGDKKPDGSSKYQADFASEFETAQNLVGAPGFTSARLYTMIQAGTANDPISAIPAAIAQNTSLLLGLWASGNNMNNELTALKAAISQYGEDLSKLVVGISVGSEDLYRNSVLGQKVNAGVGVDPHVLASYIEEVRSTISGTPLSGAPLGHVDTWNDWVNGSNAAVIDAVDWVGFDGYPYFQNTMANSIDDAKALFNEAVAKTKSAAGNKEVWITETGWPVSGKTENLAVASIPNAKRFWDEVGCPLFDNTNTWWYTLQDAFGASVPNPSFGIVGSTLTTQPLFDLSCSKSNTTSSSAIASPTSTAAAAGGVAGGSTGSASGSSTGTGSSSGSGSNSNTGAASGAVGAADRETSGTSGSANTNGTSGSGSGSNSTSGHGSNVTVPTRPTSVSNVSPSKSSSALFTGAATSMGASPSSVGNVGPSKSSGAASPSSTTMFTGAATSVSAPVVHVVLLALMMVIAA</sequence>
<protein>
    <recommendedName>
        <fullName>Probable glucan endo-1,3-beta-glucosidase eglC</fullName>
        <ecNumber>3.2.1.39</ecNumber>
    </recommendedName>
    <alternativeName>
        <fullName>Endo-1,3-beta-glucanase eglC</fullName>
    </alternativeName>
    <alternativeName>
        <fullName>Laminarinase eglC</fullName>
    </alternativeName>
</protein>
<evidence type="ECO:0000250" key="1"/>
<evidence type="ECO:0000250" key="2">
    <source>
        <dbReference type="UniProtKB" id="O22317"/>
    </source>
</evidence>
<evidence type="ECO:0000255" key="3"/>
<evidence type="ECO:0000256" key="4">
    <source>
        <dbReference type="SAM" id="MobiDB-lite"/>
    </source>
</evidence>
<evidence type="ECO:0000305" key="5"/>
<name>EGLC_ASPTN</name>